<protein>
    <recommendedName>
        <fullName>Uncharacterized rhomboid protein P4H10.10, mitochondrial</fullName>
        <ecNumber>3.4.21.-</ecNumber>
    </recommendedName>
</protein>
<reference key="1">
    <citation type="journal article" date="2002" name="Nature">
        <title>The genome sequence of Schizosaccharomyces pombe.</title>
        <authorList>
            <person name="Wood V."/>
            <person name="Gwilliam R."/>
            <person name="Rajandream M.A."/>
            <person name="Lyne M.H."/>
            <person name="Lyne R."/>
            <person name="Stewart A."/>
            <person name="Sgouros J.G."/>
            <person name="Peat N."/>
            <person name="Hayles J."/>
            <person name="Baker S.G."/>
            <person name="Basham D."/>
            <person name="Bowman S."/>
            <person name="Brooks K."/>
            <person name="Brown D."/>
            <person name="Brown S."/>
            <person name="Chillingworth T."/>
            <person name="Churcher C.M."/>
            <person name="Collins M."/>
            <person name="Connor R."/>
            <person name="Cronin A."/>
            <person name="Davis P."/>
            <person name="Feltwell T."/>
            <person name="Fraser A."/>
            <person name="Gentles S."/>
            <person name="Goble A."/>
            <person name="Hamlin N."/>
            <person name="Harris D.E."/>
            <person name="Hidalgo J."/>
            <person name="Hodgson G."/>
            <person name="Holroyd S."/>
            <person name="Hornsby T."/>
            <person name="Howarth S."/>
            <person name="Huckle E.J."/>
            <person name="Hunt S."/>
            <person name="Jagels K."/>
            <person name="James K.D."/>
            <person name="Jones L."/>
            <person name="Jones M."/>
            <person name="Leather S."/>
            <person name="McDonald S."/>
            <person name="McLean J."/>
            <person name="Mooney P."/>
            <person name="Moule S."/>
            <person name="Mungall K.L."/>
            <person name="Murphy L.D."/>
            <person name="Niblett D."/>
            <person name="Odell C."/>
            <person name="Oliver K."/>
            <person name="O'Neil S."/>
            <person name="Pearson D."/>
            <person name="Quail M.A."/>
            <person name="Rabbinowitsch E."/>
            <person name="Rutherford K.M."/>
            <person name="Rutter S."/>
            <person name="Saunders D."/>
            <person name="Seeger K."/>
            <person name="Sharp S."/>
            <person name="Skelton J."/>
            <person name="Simmonds M.N."/>
            <person name="Squares R."/>
            <person name="Squares S."/>
            <person name="Stevens K."/>
            <person name="Taylor K."/>
            <person name="Taylor R.G."/>
            <person name="Tivey A."/>
            <person name="Walsh S.V."/>
            <person name="Warren T."/>
            <person name="Whitehead S."/>
            <person name="Woodward J.R."/>
            <person name="Volckaert G."/>
            <person name="Aert R."/>
            <person name="Robben J."/>
            <person name="Grymonprez B."/>
            <person name="Weltjens I."/>
            <person name="Vanstreels E."/>
            <person name="Rieger M."/>
            <person name="Schaefer M."/>
            <person name="Mueller-Auer S."/>
            <person name="Gabel C."/>
            <person name="Fuchs M."/>
            <person name="Duesterhoeft A."/>
            <person name="Fritzc C."/>
            <person name="Holzer E."/>
            <person name="Moestl D."/>
            <person name="Hilbert H."/>
            <person name="Borzym K."/>
            <person name="Langer I."/>
            <person name="Beck A."/>
            <person name="Lehrach H."/>
            <person name="Reinhardt R."/>
            <person name="Pohl T.M."/>
            <person name="Eger P."/>
            <person name="Zimmermann W."/>
            <person name="Wedler H."/>
            <person name="Wambutt R."/>
            <person name="Purnelle B."/>
            <person name="Goffeau A."/>
            <person name="Cadieu E."/>
            <person name="Dreano S."/>
            <person name="Gloux S."/>
            <person name="Lelaure V."/>
            <person name="Mottier S."/>
            <person name="Galibert F."/>
            <person name="Aves S.J."/>
            <person name="Xiang Z."/>
            <person name="Hunt C."/>
            <person name="Moore K."/>
            <person name="Hurst S.M."/>
            <person name="Lucas M."/>
            <person name="Rochet M."/>
            <person name="Gaillardin C."/>
            <person name="Tallada V.A."/>
            <person name="Garzon A."/>
            <person name="Thode G."/>
            <person name="Daga R.R."/>
            <person name="Cruzado L."/>
            <person name="Jimenez J."/>
            <person name="Sanchez M."/>
            <person name="del Rey F."/>
            <person name="Benito J."/>
            <person name="Dominguez A."/>
            <person name="Revuelta J.L."/>
            <person name="Moreno S."/>
            <person name="Armstrong J."/>
            <person name="Forsburg S.L."/>
            <person name="Cerutti L."/>
            <person name="Lowe T."/>
            <person name="McCombie W.R."/>
            <person name="Paulsen I."/>
            <person name="Potashkin J."/>
            <person name="Shpakovski G.V."/>
            <person name="Ussery D."/>
            <person name="Barrell B.G."/>
            <person name="Nurse P."/>
        </authorList>
    </citation>
    <scope>NUCLEOTIDE SEQUENCE [LARGE SCALE GENOMIC DNA]</scope>
    <source>
        <strain>972 / ATCC 24843</strain>
    </source>
</reference>
<reference key="2">
    <citation type="journal article" date="2006" name="Nat. Biotechnol.">
        <title>ORFeome cloning and global analysis of protein localization in the fission yeast Schizosaccharomyces pombe.</title>
        <authorList>
            <person name="Matsuyama A."/>
            <person name="Arai R."/>
            <person name="Yashiroda Y."/>
            <person name="Shirai A."/>
            <person name="Kamata A."/>
            <person name="Sekido S."/>
            <person name="Kobayashi Y."/>
            <person name="Hashimoto A."/>
            <person name="Hamamoto M."/>
            <person name="Hiraoka Y."/>
            <person name="Horinouchi S."/>
            <person name="Yoshida M."/>
        </authorList>
    </citation>
    <scope>SUBCELLULAR LOCATION [LARGE SCALE ANALYSIS]</scope>
</reference>
<organism>
    <name type="scientific">Schizosaccharomyces pombe (strain 972 / ATCC 24843)</name>
    <name type="common">Fission yeast</name>
    <dbReference type="NCBI Taxonomy" id="284812"/>
    <lineage>
        <taxon>Eukaryota</taxon>
        <taxon>Fungi</taxon>
        <taxon>Dikarya</taxon>
        <taxon>Ascomycota</taxon>
        <taxon>Taphrinomycotina</taxon>
        <taxon>Schizosaccharomycetes</taxon>
        <taxon>Schizosaccharomycetales</taxon>
        <taxon>Schizosaccharomycetaceae</taxon>
        <taxon>Schizosaccharomyces</taxon>
    </lineage>
</organism>
<sequence>MCISSSSLLCGINSLKYASNRVGILIPPFQTASSLNIFRPYVIFSRSHRSLSSVDVSSPSLPLREHLPLKNVYSQVPLLPVWSPIPKGPRRFLLPPKFHYRLSPPPGEFKSSPRVAIMVAVIVCLVNGVVFWHWDLARDEAIRLHDFKRFRFMMTHAQASLFNLYEGRWWTLVVSIFSHQNLAHLLVNCVAIYSFLSIVVYKFGVWKALSVYLGAGVFGNYVALQRMMNEENPFATLPNGPTKVWDLLFPKGPYPPISRPALYLGSNPEYGPIIRTATFVPQSWATGLLGASGAVYATAAIFACLFPYTEFFLFFVYPVKAGIFMPLDFIAEYVLCLLNYEKKFHVAFDAHVSGTFFGVVSSLFLLPAMWKRRSLYCVGIVKKRIWSNKAKA</sequence>
<accession>Q9P7D8</accession>
<evidence type="ECO:0000250" key="1"/>
<evidence type="ECO:0000255" key="2"/>
<evidence type="ECO:0000269" key="3">
    <source>
    </source>
</evidence>
<evidence type="ECO:0000305" key="4"/>
<keyword id="KW-0378">Hydrolase</keyword>
<keyword id="KW-0472">Membrane</keyword>
<keyword id="KW-0496">Mitochondrion</keyword>
<keyword id="KW-0999">Mitochondrion inner membrane</keyword>
<keyword id="KW-0645">Protease</keyword>
<keyword id="KW-1185">Reference proteome</keyword>
<keyword id="KW-0720">Serine protease</keyword>
<keyword id="KW-0809">Transit peptide</keyword>
<keyword id="KW-0812">Transmembrane</keyword>
<keyword id="KW-1133">Transmembrane helix</keyword>
<proteinExistence type="inferred from homology"/>
<dbReference type="EC" id="3.4.21.-"/>
<dbReference type="EMBL" id="CU329671">
    <property type="protein sequence ID" value="CAB83168.1"/>
    <property type="molecule type" value="Genomic_DNA"/>
</dbReference>
<dbReference type="BioGRID" id="277837">
    <property type="interactions" value="1"/>
</dbReference>
<dbReference type="STRING" id="284812.Q9P7D8"/>
<dbReference type="PaxDb" id="4896-SPBP4H10.10.1"/>
<dbReference type="EnsemblFungi" id="SPBP4H10.10.1">
    <property type="protein sequence ID" value="SPBP4H10.10.1:pep"/>
    <property type="gene ID" value="SPBP4H10.10"/>
</dbReference>
<dbReference type="KEGG" id="spo:2541325"/>
<dbReference type="PomBase" id="SPBP4H10.10"/>
<dbReference type="VEuPathDB" id="FungiDB:SPBP4H10.10"/>
<dbReference type="eggNOG" id="KOG2980">
    <property type="taxonomic scope" value="Eukaryota"/>
</dbReference>
<dbReference type="HOGENOM" id="CLU_706284_0_0_1"/>
<dbReference type="InParanoid" id="Q9P7D8"/>
<dbReference type="OMA" id="IMALFAC"/>
<dbReference type="PhylomeDB" id="Q9P7D8"/>
<dbReference type="PRO" id="PR:Q9P7D8"/>
<dbReference type="Proteomes" id="UP000002485">
    <property type="component" value="Chromosome II"/>
</dbReference>
<dbReference type="GO" id="GO:0005743">
    <property type="term" value="C:mitochondrial inner membrane"/>
    <property type="evidence" value="ECO:0007669"/>
    <property type="project" value="UniProtKB-SubCell"/>
</dbReference>
<dbReference type="GO" id="GO:0005739">
    <property type="term" value="C:mitochondrion"/>
    <property type="evidence" value="ECO:0007005"/>
    <property type="project" value="PomBase"/>
</dbReference>
<dbReference type="GO" id="GO:0004252">
    <property type="term" value="F:serine-type endopeptidase activity"/>
    <property type="evidence" value="ECO:0000318"/>
    <property type="project" value="GO_Central"/>
</dbReference>
<dbReference type="GO" id="GO:0006465">
    <property type="term" value="P:signal peptide processing"/>
    <property type="evidence" value="ECO:0000318"/>
    <property type="project" value="GO_Central"/>
</dbReference>
<dbReference type="Gene3D" id="1.20.1540.10">
    <property type="entry name" value="Rhomboid-like"/>
    <property type="match status" value="1"/>
</dbReference>
<dbReference type="InterPro" id="IPR022764">
    <property type="entry name" value="Peptidase_S54_rhomboid_dom"/>
</dbReference>
<dbReference type="InterPro" id="IPR035952">
    <property type="entry name" value="Rhomboid-like_sf"/>
</dbReference>
<dbReference type="InterPro" id="IPR050925">
    <property type="entry name" value="Rhomboid_protease_S54"/>
</dbReference>
<dbReference type="PANTHER" id="PTHR43731:SF14">
    <property type="entry name" value="PRESENILIN-ASSOCIATED RHOMBOID-LIKE PROTEIN, MITOCHONDRIAL"/>
    <property type="match status" value="1"/>
</dbReference>
<dbReference type="PANTHER" id="PTHR43731">
    <property type="entry name" value="RHOMBOID PROTEASE"/>
    <property type="match status" value="1"/>
</dbReference>
<dbReference type="Pfam" id="PF01694">
    <property type="entry name" value="Rhomboid"/>
    <property type="match status" value="2"/>
</dbReference>
<dbReference type="SUPFAM" id="SSF144091">
    <property type="entry name" value="Rhomboid-like"/>
    <property type="match status" value="1"/>
</dbReference>
<comment type="subcellular location">
    <subcellularLocation>
        <location evidence="3">Mitochondrion inner membrane</location>
        <topology evidence="3">Multi-pass membrane protein</topology>
    </subcellularLocation>
</comment>
<comment type="similarity">
    <text evidence="4">Belongs to the peptidase S54 family.</text>
</comment>
<name>YOFA_SCHPO</name>
<gene>
    <name type="ORF">SPBP4H10.10</name>
</gene>
<feature type="transit peptide" description="Mitochondrion" evidence="2">
    <location>
        <begin position="1"/>
        <end position="34"/>
    </location>
</feature>
<feature type="chain" id="PRO_0000317208" description="Uncharacterized rhomboid protein P4H10.10, mitochondrial">
    <location>
        <begin position="35"/>
        <end position="392"/>
    </location>
</feature>
<feature type="transmembrane region" description="Helical" evidence="2">
    <location>
        <begin position="115"/>
        <end position="135"/>
    </location>
</feature>
<feature type="transmembrane region" description="Helical" evidence="2">
    <location>
        <begin position="150"/>
        <end position="172"/>
    </location>
</feature>
<feature type="transmembrane region" description="Helical" evidence="2">
    <location>
        <begin position="185"/>
        <end position="205"/>
    </location>
</feature>
<feature type="transmembrane region" description="Helical" evidence="2">
    <location>
        <begin position="208"/>
        <end position="225"/>
    </location>
</feature>
<feature type="transmembrane region" description="Helical" evidence="2">
    <location>
        <begin position="277"/>
        <end position="297"/>
    </location>
</feature>
<feature type="transmembrane region" description="Helical" evidence="2">
    <location>
        <begin position="299"/>
        <end position="319"/>
    </location>
</feature>
<feature type="transmembrane region" description="Helical" evidence="2">
    <location>
        <begin position="321"/>
        <end position="341"/>
    </location>
</feature>
<feature type="transmembrane region" description="Helical" evidence="2">
    <location>
        <begin position="350"/>
        <end position="370"/>
    </location>
</feature>
<feature type="active site" description="Nucleophile" evidence="1">
    <location>
        <position position="292"/>
    </location>
</feature>
<feature type="active site" evidence="1">
    <location>
        <position position="351"/>
    </location>
</feature>